<proteinExistence type="evidence at protein level"/>
<dbReference type="EC" id="2.1.1.331" evidence="2"/>
<dbReference type="EMBL" id="AE006470">
    <property type="protein sequence ID" value="AAM72550.2"/>
    <property type="molecule type" value="Genomic_DNA"/>
</dbReference>
<dbReference type="RefSeq" id="NP_662208.1">
    <property type="nucleotide sequence ID" value="NC_002932.3"/>
</dbReference>
<dbReference type="SMR" id="Q8KCU0"/>
<dbReference type="STRING" id="194439.CT1320"/>
<dbReference type="EnsemblBacteria" id="AAM72550">
    <property type="protein sequence ID" value="AAM72550"/>
    <property type="gene ID" value="CT1320"/>
</dbReference>
<dbReference type="KEGG" id="cte:CT1320"/>
<dbReference type="PATRIC" id="fig|194439.7.peg.1202"/>
<dbReference type="eggNOG" id="COG1032">
    <property type="taxonomic scope" value="Bacteria"/>
</dbReference>
<dbReference type="HOGENOM" id="CLU_021572_5_1_10"/>
<dbReference type="OrthoDB" id="9801424at2"/>
<dbReference type="BioCyc" id="MetaCyc:MONOMER-19704"/>
<dbReference type="UniPathway" id="UPA00671"/>
<dbReference type="Proteomes" id="UP000001007">
    <property type="component" value="Chromosome"/>
</dbReference>
<dbReference type="GO" id="GO:0005829">
    <property type="term" value="C:cytosol"/>
    <property type="evidence" value="ECO:0007669"/>
    <property type="project" value="TreeGrafter"/>
</dbReference>
<dbReference type="GO" id="GO:0051539">
    <property type="term" value="F:4 iron, 4 sulfur cluster binding"/>
    <property type="evidence" value="ECO:0007669"/>
    <property type="project" value="UniProtKB-KW"/>
</dbReference>
<dbReference type="GO" id="GO:0046872">
    <property type="term" value="F:metal ion binding"/>
    <property type="evidence" value="ECO:0007669"/>
    <property type="project" value="UniProtKB-KW"/>
</dbReference>
<dbReference type="GO" id="GO:0008168">
    <property type="term" value="F:methyltransferase activity"/>
    <property type="evidence" value="ECO:0007669"/>
    <property type="project" value="UniProtKB-KW"/>
</dbReference>
<dbReference type="GO" id="GO:0036070">
    <property type="term" value="P:light-independent bacteriochlorophyll biosynthetic process"/>
    <property type="evidence" value="ECO:0007669"/>
    <property type="project" value="UniProtKB-UniPathway"/>
</dbReference>
<dbReference type="GO" id="GO:0032259">
    <property type="term" value="P:methylation"/>
    <property type="evidence" value="ECO:0007669"/>
    <property type="project" value="UniProtKB-KW"/>
</dbReference>
<dbReference type="CDD" id="cd01335">
    <property type="entry name" value="Radical_SAM"/>
    <property type="match status" value="1"/>
</dbReference>
<dbReference type="Gene3D" id="3.40.50.280">
    <property type="entry name" value="Cobalamin-binding domain"/>
    <property type="match status" value="1"/>
</dbReference>
<dbReference type="Gene3D" id="3.80.30.20">
    <property type="entry name" value="tm_1862 like domain"/>
    <property type="match status" value="1"/>
</dbReference>
<dbReference type="InterPro" id="IPR034497">
    <property type="entry name" value="Bacteriochlorophyll_C12_MT"/>
</dbReference>
<dbReference type="InterPro" id="IPR006638">
    <property type="entry name" value="Elp3/MiaA/NifB-like_rSAM"/>
</dbReference>
<dbReference type="InterPro" id="IPR034466">
    <property type="entry name" value="Methyltransferase_Class_B"/>
</dbReference>
<dbReference type="InterPro" id="IPR007197">
    <property type="entry name" value="rSAM"/>
</dbReference>
<dbReference type="InterPro" id="IPR023404">
    <property type="entry name" value="rSAM_horseshoe"/>
</dbReference>
<dbReference type="InterPro" id="IPR051198">
    <property type="entry name" value="Tetrapyrrole_Bchl_Biosynth_MTs"/>
</dbReference>
<dbReference type="PANTHER" id="PTHR43409">
    <property type="entry name" value="ANAEROBIC MAGNESIUM-PROTOPORPHYRIN IX MONOMETHYL ESTER CYCLASE-RELATED"/>
    <property type="match status" value="1"/>
</dbReference>
<dbReference type="PANTHER" id="PTHR43409:SF7">
    <property type="entry name" value="BLL1977 PROTEIN"/>
    <property type="match status" value="1"/>
</dbReference>
<dbReference type="Pfam" id="PF04055">
    <property type="entry name" value="Radical_SAM"/>
    <property type="match status" value="1"/>
</dbReference>
<dbReference type="SFLD" id="SFLDF00414">
    <property type="entry name" value="bacteriochlorophyll_C12_methyl"/>
    <property type="match status" value="1"/>
</dbReference>
<dbReference type="SFLD" id="SFLDG01123">
    <property type="entry name" value="methyltransferase_(Class_B)"/>
    <property type="match status" value="1"/>
</dbReference>
<dbReference type="SMART" id="SM00729">
    <property type="entry name" value="Elp3"/>
    <property type="match status" value="1"/>
</dbReference>
<dbReference type="SUPFAM" id="SSF102114">
    <property type="entry name" value="Radical SAM enzymes"/>
    <property type="match status" value="1"/>
</dbReference>
<dbReference type="PROSITE" id="PS51918">
    <property type="entry name" value="RADICAL_SAM"/>
    <property type="match status" value="1"/>
</dbReference>
<protein>
    <recommendedName>
        <fullName evidence="3">Bacteriochlorophyllide d C-12(1)-methyltransferase</fullName>
        <ecNumber evidence="2">2.1.1.331</ecNumber>
    </recommendedName>
</protein>
<organism>
    <name type="scientific">Chlorobaculum tepidum (strain ATCC 49652 / DSM 12025 / NBRC 103806 / TLS)</name>
    <name type="common">Chlorobium tepidum</name>
    <dbReference type="NCBI Taxonomy" id="194439"/>
    <lineage>
        <taxon>Bacteria</taxon>
        <taxon>Pseudomonadati</taxon>
        <taxon>Chlorobiota</taxon>
        <taxon>Chlorobiia</taxon>
        <taxon>Chlorobiales</taxon>
        <taxon>Chlorobiaceae</taxon>
        <taxon>Chlorobaculum</taxon>
    </lineage>
</organism>
<keyword id="KW-0004">4Fe-4S</keyword>
<keyword id="KW-0077">Bacteriochlorophyll biosynthesis</keyword>
<keyword id="KW-0149">Chlorophyll biosynthesis</keyword>
<keyword id="KW-0963">Cytoplasm</keyword>
<keyword id="KW-0408">Iron</keyword>
<keyword id="KW-0411">Iron-sulfur</keyword>
<keyword id="KW-0479">Metal-binding</keyword>
<keyword id="KW-0489">Methyltransferase</keyword>
<keyword id="KW-1185">Reference proteome</keyword>
<keyword id="KW-0949">S-adenosyl-L-methionine</keyword>
<keyword id="KW-0808">Transferase</keyword>
<comment type="function">
    <text evidence="2">Involved in the biosynthesis of the major light-harvesting pigment bacteriochlorophyll c (BChlc), which confers a significant competitive advantage to green sulfur bacteria living at limiting red and near-infrared light intensities. BchR is a methyltransferase that adds a single methyl group to the methyl carbon at the C-12(1) position of 8-ethyl-12-methyl-3-vinylbacteriochlorophyllide d to yield 8,12-diethyl-3-vinylbacteriochlorophyllide d.</text>
</comment>
<comment type="catalytic activity">
    <reaction evidence="2">
        <text>8-ethyl-12-methyl-3-vinylbacteriochlorophyllide d + S-adenosyl-L-methionine = 8,12-diethyl-3-vinylbacteriochlorophyllide d + S-adenosyl-L-homocysteine + H(+)</text>
        <dbReference type="Rhea" id="RHEA:49168"/>
        <dbReference type="ChEBI" id="CHEBI:15378"/>
        <dbReference type="ChEBI" id="CHEBI:57856"/>
        <dbReference type="ChEBI" id="CHEBI:59789"/>
        <dbReference type="ChEBI" id="CHEBI:90963"/>
        <dbReference type="ChEBI" id="CHEBI:90964"/>
        <dbReference type="EC" id="2.1.1.331"/>
    </reaction>
</comment>
<comment type="cofactor">
    <cofactor evidence="4">
        <name>[4Fe-4S] cluster</name>
        <dbReference type="ChEBI" id="CHEBI:49883"/>
    </cofactor>
    <text evidence="4">Binds 1 [4Fe-4S] cluster. The cluster is coordinated with 3 cysteines and an exchangeable S-adenosyl-L-methionine.</text>
</comment>
<comment type="pathway">
    <text evidence="5">Porphyrin-containing compound metabolism; bacteriochlorophyll biosynthesis (light-independent).</text>
</comment>
<comment type="subcellular location">
    <subcellularLocation>
        <location evidence="4">Cytoplasm</location>
    </subcellularLocation>
</comment>
<comment type="disruption phenotype">
    <text evidence="2">Cells lacking this gene produce bacteriochlorophyll c (BChlc) that is not methylated at C-12(1) and show a growth rate that decreases to 53% of that of the wild-type at low light intensity. Double mutants lacking both bchR and bchQ produce bacteriochlorophyll c (BChlc) that is not methylated at C-8(2) and C-12(1), and show a growth rate that decreases to 41% of that of the wild-type at low light intensity.</text>
</comment>
<comment type="similarity">
    <text evidence="4">Belongs to the radical SAM superfamily.</text>
</comment>
<evidence type="ECO:0000255" key="1">
    <source>
        <dbReference type="PROSITE-ProRule" id="PRU01266"/>
    </source>
</evidence>
<evidence type="ECO:0000269" key="2">
    <source>
    </source>
</evidence>
<evidence type="ECO:0000303" key="3">
    <source>
    </source>
</evidence>
<evidence type="ECO:0000305" key="4"/>
<evidence type="ECO:0000305" key="5">
    <source>
    </source>
</evidence>
<evidence type="ECO:0000312" key="6">
    <source>
        <dbReference type="EMBL" id="AAM72550.2"/>
    </source>
</evidence>
<evidence type="ECO:0000312" key="7">
    <source>
        <dbReference type="Proteomes" id="UP000001007"/>
    </source>
</evidence>
<accession>Q8KCU0</accession>
<gene>
    <name evidence="3" type="primary">bchR</name>
    <name evidence="6" type="ordered locus">CT1320</name>
</gene>
<name>BCHR_CHLTE</name>
<feature type="chain" id="PRO_0000444472" description="Bacteriochlorophyllide d C-12(1)-methyltransferase">
    <location>
        <begin position="1"/>
        <end position="456"/>
    </location>
</feature>
<feature type="domain" description="Radical SAM core" evidence="1">
    <location>
        <begin position="178"/>
        <end position="405"/>
    </location>
</feature>
<feature type="binding site" evidence="4">
    <location>
        <position position="194"/>
    </location>
    <ligand>
        <name>[4Fe-4S] cluster</name>
        <dbReference type="ChEBI" id="CHEBI:49883"/>
        <note>4Fe-4S-S-AdoMet</note>
    </ligand>
</feature>
<feature type="binding site" evidence="4">
    <location>
        <position position="198"/>
    </location>
    <ligand>
        <name>[4Fe-4S] cluster</name>
        <dbReference type="ChEBI" id="CHEBI:49883"/>
        <note>4Fe-4S-S-AdoMet</note>
    </ligand>
</feature>
<feature type="binding site" evidence="4">
    <location>
        <position position="201"/>
    </location>
    <ligand>
        <name>[4Fe-4S] cluster</name>
        <dbReference type="ChEBI" id="CHEBI:49883"/>
        <note>4Fe-4S-S-AdoMet</note>
    </ligand>
</feature>
<reference key="1">
    <citation type="journal article" date="2002" name="Proc. Natl. Acad. Sci. U.S.A.">
        <title>The complete genome sequence of Chlorobium tepidum TLS, a photosynthetic, anaerobic, green-sulfur bacterium.</title>
        <authorList>
            <person name="Eisen J.A."/>
            <person name="Nelson K.E."/>
            <person name="Paulsen I.T."/>
            <person name="Heidelberg J.F."/>
            <person name="Wu M."/>
            <person name="Dodson R.J."/>
            <person name="DeBoy R.T."/>
            <person name="Gwinn M.L."/>
            <person name="Nelson W.C."/>
            <person name="Haft D.H."/>
            <person name="Hickey E.K."/>
            <person name="Peterson J.D."/>
            <person name="Durkin A.S."/>
            <person name="Kolonay J.F."/>
            <person name="Yang F."/>
            <person name="Holt I.E."/>
            <person name="Umayam L.A."/>
            <person name="Mason T.M."/>
            <person name="Brenner M."/>
            <person name="Shea T.P."/>
            <person name="Parksey D.S."/>
            <person name="Nierman W.C."/>
            <person name="Feldblyum T.V."/>
            <person name="Hansen C.L."/>
            <person name="Craven M.B."/>
            <person name="Radune D."/>
            <person name="Vamathevan J.J."/>
            <person name="Khouri H.M."/>
            <person name="White O."/>
            <person name="Gruber T.M."/>
            <person name="Ketchum K.A."/>
            <person name="Venter J.C."/>
            <person name="Tettelin H."/>
            <person name="Bryant D.A."/>
            <person name="Fraser C.M."/>
        </authorList>
    </citation>
    <scope>NUCLEOTIDE SEQUENCE [LARGE SCALE GENOMIC DNA]</scope>
    <source>
        <strain evidence="7">ATCC 49652 / DSM 12025 / NBRC 103806 / TLS</strain>
    </source>
</reference>
<reference key="2">
    <citation type="journal article" date="2007" name="J. Bacteriol.">
        <title>Bacteriochlorophyllide c C-8(2) and C-12(1) methyltransferases are essential for adaptation to low light in Chlorobaculum tepidum.</title>
        <authorList>
            <person name="Gomez Maqueo Chew A."/>
            <person name="Frigaard N.U."/>
            <person name="Bryant D.A."/>
        </authorList>
    </citation>
    <scope>FUNCTION</scope>
    <scope>CATALYTIC ACTIVITY</scope>
    <scope>DISRUPTION PHENOTYPE</scope>
    <scope>PATHWAY</scope>
    <scope>COFACTOR</scope>
    <source>
        <strain evidence="7">ATCC 49652 / DSM 12025 / NBRC 103806 / TLS</strain>
    </source>
</reference>
<sequence length="456" mass="52245">MSLTNGVAPSLEKLAAEQKSRKKWLLVQPKSQTSMMVDSGAVSMPLNLIMVATLASKYFDVTFLDERTGDTIPQDFSGYDVVAITSRTLNAKNAYRIGDRAKAQGKIVLIGGVHPTMLTDEASLHCTSVIYGEIESVWEELAIDIFRGKMKSVYKASNLKPMTTMTPPDFSFALNSPHAKKYSQLIPILATKGCPVGCSFCTTPTVYGKSFRYREIDLVLDEMRAHQERLGKKKVRFSFMDDNISFRPKYFMELLEGMAKLGVRWNANISMNFLQKPEVAELAGRSGCELMSIGFESLNPDILKSMNKGSNRLQNYEAVVSNLHKHKIAIQGYFIFGFDDDSEKSFQATYDFIMQNRIEFPVFSLLTPFPGTPYFEEMKDRVRHFDWDKYDTYHYMFEPKKLGGEKLLENFIKLQREVYKGSAIMKRMQGKPLNWVWFVNFLMNRFTRKLTPEMYL</sequence>